<comment type="function">
    <text evidence="1">One of the primary rRNA binding proteins, it binds directly to 16S rRNA where it helps nucleate assembly of the platform of the 30S subunit by binding and bridging several RNA helices of the 16S rRNA.</text>
</comment>
<comment type="function">
    <text evidence="1">Forms an intersubunit bridge (bridge B4) with the 23S rRNA of the 50S subunit in the ribosome.</text>
</comment>
<comment type="subunit">
    <text evidence="1">Part of the 30S ribosomal subunit. Forms a bridge to the 50S subunit in the 70S ribosome, contacting the 23S rRNA.</text>
</comment>
<comment type="similarity">
    <text evidence="1">Belongs to the universal ribosomal protein uS15 family.</text>
</comment>
<name>RS15_NITV9</name>
<gene>
    <name evidence="1" type="primary">rpsO</name>
    <name type="ordered locus">DvMF_2509</name>
</gene>
<proteinExistence type="inferred from homology"/>
<dbReference type="EMBL" id="CP001197">
    <property type="protein sequence ID" value="ACL09448.1"/>
    <property type="molecule type" value="Genomic_DNA"/>
</dbReference>
<dbReference type="SMR" id="B8DN08"/>
<dbReference type="STRING" id="883.DvMF_2509"/>
<dbReference type="KEGG" id="dvm:DvMF_2509"/>
<dbReference type="eggNOG" id="COG0184">
    <property type="taxonomic scope" value="Bacteria"/>
</dbReference>
<dbReference type="HOGENOM" id="CLU_148518_0_0_7"/>
<dbReference type="OrthoDB" id="9799262at2"/>
<dbReference type="GO" id="GO:0022627">
    <property type="term" value="C:cytosolic small ribosomal subunit"/>
    <property type="evidence" value="ECO:0007669"/>
    <property type="project" value="TreeGrafter"/>
</dbReference>
<dbReference type="GO" id="GO:0019843">
    <property type="term" value="F:rRNA binding"/>
    <property type="evidence" value="ECO:0007669"/>
    <property type="project" value="UniProtKB-UniRule"/>
</dbReference>
<dbReference type="GO" id="GO:0003735">
    <property type="term" value="F:structural constituent of ribosome"/>
    <property type="evidence" value="ECO:0007669"/>
    <property type="project" value="InterPro"/>
</dbReference>
<dbReference type="GO" id="GO:0006412">
    <property type="term" value="P:translation"/>
    <property type="evidence" value="ECO:0007669"/>
    <property type="project" value="UniProtKB-UniRule"/>
</dbReference>
<dbReference type="CDD" id="cd00353">
    <property type="entry name" value="Ribosomal_S15p_S13e"/>
    <property type="match status" value="1"/>
</dbReference>
<dbReference type="FunFam" id="1.10.287.10:FF:000002">
    <property type="entry name" value="30S ribosomal protein S15"/>
    <property type="match status" value="1"/>
</dbReference>
<dbReference type="Gene3D" id="6.10.250.3130">
    <property type="match status" value="1"/>
</dbReference>
<dbReference type="Gene3D" id="1.10.287.10">
    <property type="entry name" value="S15/NS1, RNA-binding"/>
    <property type="match status" value="1"/>
</dbReference>
<dbReference type="HAMAP" id="MF_01343_B">
    <property type="entry name" value="Ribosomal_uS15_B"/>
    <property type="match status" value="1"/>
</dbReference>
<dbReference type="InterPro" id="IPR000589">
    <property type="entry name" value="Ribosomal_uS15"/>
</dbReference>
<dbReference type="InterPro" id="IPR005290">
    <property type="entry name" value="Ribosomal_uS15_bac-type"/>
</dbReference>
<dbReference type="InterPro" id="IPR009068">
    <property type="entry name" value="uS15_NS1_RNA-bd_sf"/>
</dbReference>
<dbReference type="NCBIfam" id="TIGR00952">
    <property type="entry name" value="S15_bact"/>
    <property type="match status" value="1"/>
</dbReference>
<dbReference type="PANTHER" id="PTHR23321">
    <property type="entry name" value="RIBOSOMAL PROTEIN S15, BACTERIAL AND ORGANELLAR"/>
    <property type="match status" value="1"/>
</dbReference>
<dbReference type="PANTHER" id="PTHR23321:SF26">
    <property type="entry name" value="SMALL RIBOSOMAL SUBUNIT PROTEIN US15M"/>
    <property type="match status" value="1"/>
</dbReference>
<dbReference type="Pfam" id="PF00312">
    <property type="entry name" value="Ribosomal_S15"/>
    <property type="match status" value="1"/>
</dbReference>
<dbReference type="SMART" id="SM01387">
    <property type="entry name" value="Ribosomal_S15"/>
    <property type="match status" value="1"/>
</dbReference>
<dbReference type="SUPFAM" id="SSF47060">
    <property type="entry name" value="S15/NS1 RNA-binding domain"/>
    <property type="match status" value="1"/>
</dbReference>
<dbReference type="PROSITE" id="PS00362">
    <property type="entry name" value="RIBOSOMAL_S15"/>
    <property type="match status" value="1"/>
</dbReference>
<accession>B8DN08</accession>
<keyword id="KW-0687">Ribonucleoprotein</keyword>
<keyword id="KW-0689">Ribosomal protein</keyword>
<keyword id="KW-0694">RNA-binding</keyword>
<keyword id="KW-0699">rRNA-binding</keyword>
<feature type="chain" id="PRO_1000143105" description="Small ribosomal subunit protein uS15">
    <location>
        <begin position="1"/>
        <end position="89"/>
    </location>
</feature>
<organism>
    <name type="scientific">Nitratidesulfovibrio vulgaris (strain DSM 19637 / Miyazaki F)</name>
    <name type="common">Desulfovibrio vulgaris</name>
    <dbReference type="NCBI Taxonomy" id="883"/>
    <lineage>
        <taxon>Bacteria</taxon>
        <taxon>Pseudomonadati</taxon>
        <taxon>Thermodesulfobacteriota</taxon>
        <taxon>Desulfovibrionia</taxon>
        <taxon>Desulfovibrionales</taxon>
        <taxon>Desulfovibrionaceae</taxon>
        <taxon>Nitratidesulfovibrio</taxon>
    </lineage>
</organism>
<reference key="1">
    <citation type="submission" date="2008-10" db="EMBL/GenBank/DDBJ databases">
        <title>Complete sequence of Desulfovibrio vulgaris str. 'Miyazaki F'.</title>
        <authorList>
            <person name="Lucas S."/>
            <person name="Copeland A."/>
            <person name="Lapidus A."/>
            <person name="Glavina del Rio T."/>
            <person name="Dalin E."/>
            <person name="Tice H."/>
            <person name="Bruce D."/>
            <person name="Goodwin L."/>
            <person name="Pitluck S."/>
            <person name="Sims D."/>
            <person name="Brettin T."/>
            <person name="Detter J.C."/>
            <person name="Han C."/>
            <person name="Larimer F."/>
            <person name="Land M."/>
            <person name="Hauser L."/>
            <person name="Kyrpides N."/>
            <person name="Mikhailova N."/>
            <person name="Hazen T.C."/>
            <person name="Richardson P."/>
        </authorList>
    </citation>
    <scope>NUCLEOTIDE SEQUENCE [LARGE SCALE GENOMIC DNA]</scope>
    <source>
        <strain>DSM 19637 / Miyazaki F</strain>
    </source>
</reference>
<protein>
    <recommendedName>
        <fullName evidence="1">Small ribosomal subunit protein uS15</fullName>
    </recommendedName>
    <alternativeName>
        <fullName evidence="2">30S ribosomal protein S15</fullName>
    </alternativeName>
</protein>
<evidence type="ECO:0000255" key="1">
    <source>
        <dbReference type="HAMAP-Rule" id="MF_01343"/>
    </source>
</evidence>
<evidence type="ECO:0000305" key="2"/>
<sequence>MVMDVDQKKSIIDVHAKHEGDTGSPEVQVALLTARIEQLTGHFKTHKKDFHSRTGLLKMVGQRRKLLKYLKAKDVQRYRALIEKLGLRK</sequence>